<name>Y4HL_SINFN</name>
<reference key="1">
    <citation type="journal article" date="1997" name="Nature">
        <title>Molecular basis of symbiosis between Rhizobium and legumes.</title>
        <authorList>
            <person name="Freiberg C.A."/>
            <person name="Fellay R."/>
            <person name="Bairoch A."/>
            <person name="Broughton W.J."/>
            <person name="Rosenthal A."/>
            <person name="Perret X."/>
        </authorList>
    </citation>
    <scope>NUCLEOTIDE SEQUENCE [LARGE SCALE GENOMIC DNA]</scope>
    <source>
        <strain>NBRC 101917 / NGR234</strain>
    </source>
</reference>
<reference key="2">
    <citation type="journal article" date="2009" name="Appl. Environ. Microbiol.">
        <title>Rhizobium sp. strain NGR234 possesses a remarkable number of secretion systems.</title>
        <authorList>
            <person name="Schmeisser C."/>
            <person name="Liesegang H."/>
            <person name="Krysciak D."/>
            <person name="Bakkou N."/>
            <person name="Le Quere A."/>
            <person name="Wollherr A."/>
            <person name="Heinemeyer I."/>
            <person name="Morgenstern B."/>
            <person name="Pommerening-Roeser A."/>
            <person name="Flores M."/>
            <person name="Palacios R."/>
            <person name="Brenner S."/>
            <person name="Gottschalk G."/>
            <person name="Schmitz R.A."/>
            <person name="Broughton W.J."/>
            <person name="Perret X."/>
            <person name="Strittmatter A.W."/>
            <person name="Streit W.R."/>
        </authorList>
    </citation>
    <scope>NUCLEOTIDE SEQUENCE [LARGE SCALE GENOMIC DNA]</scope>
    <source>
        <strain>NBRC 101917 / NGR234</strain>
    </source>
</reference>
<gene>
    <name type="ordered locus">NGR_a03380</name>
    <name type="ORF">y4hL</name>
</gene>
<keyword id="KW-0614">Plasmid</keyword>
<keyword id="KW-1185">Reference proteome</keyword>
<accession>P55479</accession>
<dbReference type="EMBL" id="U00090">
    <property type="protein sequence ID" value="AAB92450.1"/>
    <property type="molecule type" value="Genomic_DNA"/>
</dbReference>
<dbReference type="PIR" id="T10846">
    <property type="entry name" value="T10846"/>
</dbReference>
<dbReference type="RefSeq" id="NP_443888.1">
    <property type="nucleotide sequence ID" value="NC_000914.2"/>
</dbReference>
<dbReference type="RefSeq" id="WP_010875352.1">
    <property type="nucleotide sequence ID" value="NC_000914.2"/>
</dbReference>
<dbReference type="SMR" id="P55479"/>
<dbReference type="KEGG" id="rhi:NGR_a03380"/>
<dbReference type="HOGENOM" id="CLU_2510402_0_0_5"/>
<dbReference type="Proteomes" id="UP000001054">
    <property type="component" value="Plasmid pNGR234a"/>
</dbReference>
<geneLocation type="plasmid">
    <name>sym pNGR234a</name>
</geneLocation>
<sequence>MSLNVISDDRTPHQHGTWNVAGALAPKVETSNSAHHDADSHSVVYDARYAKRPENHLAAIVNLVATNLNGAISKEHRKFESGRRS</sequence>
<organism>
    <name type="scientific">Sinorhizobium fredii (strain NBRC 101917 / NGR234)</name>
    <dbReference type="NCBI Taxonomy" id="394"/>
    <lineage>
        <taxon>Bacteria</taxon>
        <taxon>Pseudomonadati</taxon>
        <taxon>Pseudomonadota</taxon>
        <taxon>Alphaproteobacteria</taxon>
        <taxon>Hyphomicrobiales</taxon>
        <taxon>Rhizobiaceae</taxon>
        <taxon>Sinorhizobium/Ensifer group</taxon>
        <taxon>Sinorhizobium</taxon>
    </lineage>
</organism>
<proteinExistence type="predicted"/>
<protein>
    <recommendedName>
        <fullName>Uncharacterized protein y4hL</fullName>
    </recommendedName>
</protein>
<feature type="chain" id="PRO_0000200850" description="Uncharacterized protein y4hL">
    <location>
        <begin position="1"/>
        <end position="85"/>
    </location>
</feature>